<keyword id="KW-0119">Carbohydrate metabolism</keyword>
<keyword id="KW-0150">Chloroplast</keyword>
<keyword id="KW-1015">Disulfide bond</keyword>
<keyword id="KW-0313">Glucose metabolism</keyword>
<keyword id="KW-0521">NADP</keyword>
<keyword id="KW-0560">Oxidoreductase</keyword>
<keyword id="KW-0934">Plastid</keyword>
<keyword id="KW-1185">Reference proteome</keyword>
<keyword id="KW-0809">Transit peptide</keyword>
<dbReference type="EC" id="1.1.1.49" evidence="6"/>
<dbReference type="EMBL" id="X83923">
    <property type="protein sequence ID" value="CAA58775.1"/>
    <property type="molecule type" value="mRNA"/>
</dbReference>
<dbReference type="PIR" id="T07375">
    <property type="entry name" value="T07375"/>
</dbReference>
<dbReference type="RefSeq" id="NP_001275038.1">
    <property type="nucleotide sequence ID" value="NM_001288109.1"/>
</dbReference>
<dbReference type="SMR" id="Q43839"/>
<dbReference type="FunCoup" id="Q43839">
    <property type="interactions" value="916"/>
</dbReference>
<dbReference type="STRING" id="4113.Q43839"/>
<dbReference type="PaxDb" id="4113-PGSC0003DMT400044818"/>
<dbReference type="GeneID" id="102594145"/>
<dbReference type="KEGG" id="sot:102594145"/>
<dbReference type="eggNOG" id="KOG0563">
    <property type="taxonomic scope" value="Eukaryota"/>
</dbReference>
<dbReference type="InParanoid" id="Q43839"/>
<dbReference type="OrthoDB" id="60984at2759"/>
<dbReference type="UniPathway" id="UPA00115">
    <property type="reaction ID" value="UER00408"/>
</dbReference>
<dbReference type="Proteomes" id="UP000011115">
    <property type="component" value="Unassembled WGS sequence"/>
</dbReference>
<dbReference type="ExpressionAtlas" id="Q43839">
    <property type="expression patterns" value="baseline and differential"/>
</dbReference>
<dbReference type="GO" id="GO:0009507">
    <property type="term" value="C:chloroplast"/>
    <property type="evidence" value="ECO:0007669"/>
    <property type="project" value="UniProtKB-SubCell"/>
</dbReference>
<dbReference type="GO" id="GO:0004345">
    <property type="term" value="F:glucose-6-phosphate dehydrogenase activity"/>
    <property type="evidence" value="ECO:0000318"/>
    <property type="project" value="GO_Central"/>
</dbReference>
<dbReference type="GO" id="GO:0050661">
    <property type="term" value="F:NADP binding"/>
    <property type="evidence" value="ECO:0007669"/>
    <property type="project" value="InterPro"/>
</dbReference>
<dbReference type="GO" id="GO:0006006">
    <property type="term" value="P:glucose metabolic process"/>
    <property type="evidence" value="ECO:0000318"/>
    <property type="project" value="GO_Central"/>
</dbReference>
<dbReference type="GO" id="GO:0009051">
    <property type="term" value="P:pentose-phosphate shunt, oxidative branch"/>
    <property type="evidence" value="ECO:0000318"/>
    <property type="project" value="GO_Central"/>
</dbReference>
<dbReference type="FunFam" id="3.30.360.10:FF:000018">
    <property type="entry name" value="Glucose-6-phosphate 1-dehydrogenase"/>
    <property type="match status" value="1"/>
</dbReference>
<dbReference type="FunFam" id="3.40.50.720:FF:000222">
    <property type="entry name" value="Glucose-6-phosphate 1-dehydrogenase"/>
    <property type="match status" value="1"/>
</dbReference>
<dbReference type="Gene3D" id="3.30.360.10">
    <property type="entry name" value="Dihydrodipicolinate Reductase, domain 2"/>
    <property type="match status" value="1"/>
</dbReference>
<dbReference type="Gene3D" id="3.40.50.720">
    <property type="entry name" value="NAD(P)-binding Rossmann-like Domain"/>
    <property type="match status" value="1"/>
</dbReference>
<dbReference type="HAMAP" id="MF_00966">
    <property type="entry name" value="G6PD"/>
    <property type="match status" value="1"/>
</dbReference>
<dbReference type="InterPro" id="IPR001282">
    <property type="entry name" value="G6P_DH"/>
</dbReference>
<dbReference type="InterPro" id="IPR019796">
    <property type="entry name" value="G6P_DH_AS"/>
</dbReference>
<dbReference type="InterPro" id="IPR022675">
    <property type="entry name" value="G6P_DH_C"/>
</dbReference>
<dbReference type="InterPro" id="IPR022674">
    <property type="entry name" value="G6P_DH_NAD-bd"/>
</dbReference>
<dbReference type="InterPro" id="IPR036291">
    <property type="entry name" value="NAD(P)-bd_dom_sf"/>
</dbReference>
<dbReference type="NCBIfam" id="TIGR00871">
    <property type="entry name" value="zwf"/>
    <property type="match status" value="1"/>
</dbReference>
<dbReference type="PANTHER" id="PTHR23429:SF13">
    <property type="entry name" value="GLUCOSE-6-PHOSPHATE 1-DEHYDROGENASE 1, CHLOROPLASTIC"/>
    <property type="match status" value="1"/>
</dbReference>
<dbReference type="PANTHER" id="PTHR23429">
    <property type="entry name" value="GLUCOSE-6-PHOSPHATE 1-DEHYDROGENASE G6PD"/>
    <property type="match status" value="1"/>
</dbReference>
<dbReference type="Pfam" id="PF02781">
    <property type="entry name" value="G6PD_C"/>
    <property type="match status" value="1"/>
</dbReference>
<dbReference type="Pfam" id="PF00479">
    <property type="entry name" value="G6PD_N"/>
    <property type="match status" value="1"/>
</dbReference>
<dbReference type="PIRSF" id="PIRSF000110">
    <property type="entry name" value="G6PD"/>
    <property type="match status" value="1"/>
</dbReference>
<dbReference type="PRINTS" id="PR00079">
    <property type="entry name" value="G6PDHDRGNASE"/>
</dbReference>
<dbReference type="SUPFAM" id="SSF55347">
    <property type="entry name" value="Glyceraldehyde-3-phosphate dehydrogenase-like, C-terminal domain"/>
    <property type="match status" value="1"/>
</dbReference>
<dbReference type="SUPFAM" id="SSF51735">
    <property type="entry name" value="NAD(P)-binding Rossmann-fold domains"/>
    <property type="match status" value="1"/>
</dbReference>
<dbReference type="PROSITE" id="PS00069">
    <property type="entry name" value="G6P_DEHYDROGENASE"/>
    <property type="match status" value="1"/>
</dbReference>
<organism>
    <name type="scientific">Solanum tuberosum</name>
    <name type="common">Potato</name>
    <dbReference type="NCBI Taxonomy" id="4113"/>
    <lineage>
        <taxon>Eukaryota</taxon>
        <taxon>Viridiplantae</taxon>
        <taxon>Streptophyta</taxon>
        <taxon>Embryophyta</taxon>
        <taxon>Tracheophyta</taxon>
        <taxon>Spermatophyta</taxon>
        <taxon>Magnoliopsida</taxon>
        <taxon>eudicotyledons</taxon>
        <taxon>Gunneridae</taxon>
        <taxon>Pentapetalae</taxon>
        <taxon>asterids</taxon>
        <taxon>lamiids</taxon>
        <taxon>Solanales</taxon>
        <taxon>Solanaceae</taxon>
        <taxon>Solanoideae</taxon>
        <taxon>Solaneae</taxon>
        <taxon>Solanum</taxon>
    </lineage>
</organism>
<feature type="transit peptide" description="Chloroplast" evidence="3">
    <location>
        <begin position="1"/>
        <end position="63"/>
    </location>
</feature>
<feature type="chain" id="PRO_0000010440" description="Glucose-6-phosphate 1-dehydrogenase, chloroplastic">
    <location>
        <begin position="64"/>
        <end position="577"/>
    </location>
</feature>
<feature type="region of interest" description="Disordered" evidence="4">
    <location>
        <begin position="1"/>
        <end position="20"/>
    </location>
</feature>
<feature type="compositionally biased region" description="Low complexity" evidence="4">
    <location>
        <begin position="11"/>
        <end position="20"/>
    </location>
</feature>
<feature type="active site" description="Proton acceptor" evidence="1">
    <location>
        <position position="326"/>
    </location>
</feature>
<feature type="binding site" evidence="2">
    <location>
        <begin position="97"/>
        <end position="104"/>
    </location>
    <ligand>
        <name>NADP(+)</name>
        <dbReference type="ChEBI" id="CHEBI:58349"/>
        <label>1</label>
    </ligand>
</feature>
<feature type="binding site" evidence="2">
    <location>
        <position position="131"/>
    </location>
    <ligand>
        <name>NADP(+)</name>
        <dbReference type="ChEBI" id="CHEBI:58349"/>
        <label>1</label>
    </ligand>
</feature>
<feature type="binding site" evidence="2">
    <location>
        <position position="234"/>
    </location>
    <ligand>
        <name>D-glucose 6-phosphate</name>
        <dbReference type="ChEBI" id="CHEBI:61548"/>
    </ligand>
</feature>
<feature type="binding site" evidence="2">
    <location>
        <position position="234"/>
    </location>
    <ligand>
        <name>NADP(+)</name>
        <dbReference type="ChEBI" id="CHEBI:58349"/>
        <label>1</label>
    </ligand>
</feature>
<feature type="binding site" evidence="2">
    <location>
        <begin position="264"/>
        <end position="268"/>
    </location>
    <ligand>
        <name>D-glucose 6-phosphate</name>
        <dbReference type="ChEBI" id="CHEBI:61548"/>
    </ligand>
</feature>
<feature type="binding site" evidence="2">
    <location>
        <position position="302"/>
    </location>
    <ligand>
        <name>D-glucose 6-phosphate</name>
        <dbReference type="ChEBI" id="CHEBI:61548"/>
    </ligand>
</feature>
<feature type="binding site" evidence="2">
    <location>
        <position position="321"/>
    </location>
    <ligand>
        <name>D-glucose 6-phosphate</name>
        <dbReference type="ChEBI" id="CHEBI:61548"/>
    </ligand>
</feature>
<feature type="binding site" evidence="2">
    <location>
        <position position="419"/>
    </location>
    <ligand>
        <name>NADP(+)</name>
        <dbReference type="ChEBI" id="CHEBI:58349"/>
        <label>2</label>
    </ligand>
</feature>
<feature type="binding site" evidence="2">
    <location>
        <position position="422"/>
    </location>
    <ligand>
        <name>D-glucose 6-phosphate</name>
        <dbReference type="ChEBI" id="CHEBI:61548"/>
    </ligand>
</feature>
<feature type="binding site" evidence="2">
    <location>
        <position position="427"/>
    </location>
    <ligand>
        <name>D-glucose 6-phosphate</name>
        <dbReference type="ChEBI" id="CHEBI:61548"/>
    </ligand>
</feature>
<feature type="binding site" evidence="2">
    <location>
        <position position="428"/>
    </location>
    <ligand>
        <name>NADP(+)</name>
        <dbReference type="ChEBI" id="CHEBI:58349"/>
        <label>2</label>
    </ligand>
</feature>
<feature type="binding site" evidence="2">
    <location>
        <position position="432"/>
    </location>
    <ligand>
        <name>NADP(+)</name>
        <dbReference type="ChEBI" id="CHEBI:58349"/>
        <label>2</label>
    </ligand>
</feature>
<feature type="binding site" evidence="2">
    <location>
        <position position="461"/>
    </location>
    <ligand>
        <name>NADP(+)</name>
        <dbReference type="ChEBI" id="CHEBI:58349"/>
        <label>2</label>
    </ligand>
</feature>
<feature type="binding site" evidence="2">
    <location>
        <position position="463"/>
    </location>
    <ligand>
        <name>D-glucose 6-phosphate</name>
        <dbReference type="ChEBI" id="CHEBI:61548"/>
    </ligand>
</feature>
<feature type="binding site" evidence="2">
    <location>
        <begin position="469"/>
        <end position="471"/>
    </location>
    <ligand>
        <name>NADP(+)</name>
        <dbReference type="ChEBI" id="CHEBI:58349"/>
        <label>2</label>
    </ligand>
</feature>
<feature type="binding site" evidence="2">
    <location>
        <position position="554"/>
    </location>
    <ligand>
        <name>NADP(+)</name>
        <dbReference type="ChEBI" id="CHEBI:58349"/>
        <label>2</label>
    </ligand>
</feature>
<feature type="disulfide bond" description="Redox modulation" evidence="6">
    <location>
        <begin position="149"/>
        <end position="157"/>
    </location>
</feature>
<feature type="mutagenesis site" description="No effect on redox regulation." evidence="6">
    <original>C</original>
    <variation>S</variation>
    <location>
        <position position="119"/>
    </location>
</feature>
<feature type="mutagenesis site" description="Abolishes redox regulation." evidence="6">
    <original>C</original>
    <variation>S</variation>
    <location>
        <position position="149"/>
    </location>
</feature>
<feature type="mutagenesis site" description="Abolishes redox regulation." evidence="6">
    <original>C</original>
    <variation>S</variation>
    <location>
        <position position="157"/>
    </location>
</feature>
<feature type="mutagenesis site" description="No effect on redox regulation." evidence="6">
    <original>C</original>
    <variation>S</variation>
    <location>
        <position position="168"/>
    </location>
</feature>
<feature type="mutagenesis site" description="No effect on redox regulation." evidence="6">
    <original>C</original>
    <variation>S</variation>
    <location>
        <position position="194"/>
    </location>
</feature>
<feature type="mutagenesis site" description="No effect on redox regulation." evidence="6">
    <original>C</original>
    <variation>S</variation>
    <location>
        <position position="216"/>
    </location>
</feature>
<reference key="1">
    <citation type="journal article" date="1995" name="Plant Physiol.">
        <title>Molecular characterization of the plastidic glucose-6-phosphate dehydrogenase from potato in comparison to its cytosolic counterpart.</title>
        <authorList>
            <person name="von Schaewen A."/>
            <person name="Langenkaemper G."/>
            <person name="Graeve K."/>
            <person name="Wenderoth I."/>
            <person name="Scheibe R."/>
        </authorList>
    </citation>
    <scope>NUCLEOTIDE SEQUENCE [MRNA]</scope>
    <scope>SUBCELLULAR LOCATION</scope>
    <scope>TISSUE SPECIFICITY</scope>
    <source>
        <strain>cv. Desiree</strain>
        <tissue>Green leaf</tissue>
    </source>
</reference>
<reference key="2">
    <citation type="journal article" date="1997" name="J. Biol. Chem.">
        <title>Identification of the cysteine residues involved in redox modification of plant plastidic glucose-6-phosphate dehydrogenase.</title>
        <authorList>
            <person name="Wenderoth I."/>
            <person name="Scheibe R."/>
            <person name="von Schaewen A."/>
        </authorList>
    </citation>
    <scope>FUNCTION</scope>
    <scope>ACTIVITY REGULATION</scope>
    <scope>DISULFIDE BOND</scope>
    <scope>MUTAGENESIS OF CYS-119; CYS-149; CYS-157; CYS-168; CYS-194 AND CYS-216</scope>
</reference>
<protein>
    <recommendedName>
        <fullName>Glucose-6-phosphate 1-dehydrogenase, chloroplastic</fullName>
        <shortName>G6PD</shortName>
        <ecNumber evidence="6">1.1.1.49</ecNumber>
    </recommendedName>
</protein>
<proteinExistence type="evidence at protein level"/>
<comment type="function">
    <text evidence="6">Catalyzes the rate-limiting step of the oxidative pentose-phosphate pathway, which represents a route for the dissimilation of carbohydrates besides glycolysis. The main function of this enzyme is to provide reducing power (NADPH) and pentose phosphates for fatty acid and nucleic acid synthesis which are involved in membrane synthesis and cell division.</text>
</comment>
<comment type="catalytic activity">
    <reaction evidence="6">
        <text>D-glucose 6-phosphate + NADP(+) = 6-phospho-D-glucono-1,5-lactone + NADPH + H(+)</text>
        <dbReference type="Rhea" id="RHEA:15841"/>
        <dbReference type="ChEBI" id="CHEBI:15378"/>
        <dbReference type="ChEBI" id="CHEBI:57783"/>
        <dbReference type="ChEBI" id="CHEBI:57955"/>
        <dbReference type="ChEBI" id="CHEBI:58349"/>
        <dbReference type="ChEBI" id="CHEBI:61548"/>
        <dbReference type="EC" id="1.1.1.49"/>
    </reaction>
</comment>
<comment type="activity regulation">
    <text evidence="6">Regulated by metabolites. Post-translationally inactivated by cysteine-mediated redox modification via the ferredoxin-thioredoxin system in the light and this avoids futile cycles with photosynthetic CO2 fixation.</text>
</comment>
<comment type="pathway">
    <text evidence="6">Carbohydrate degradation; pentose phosphate pathway; D-ribulose 5-phosphate from D-glucose 6-phosphate (oxidative stage): step 1/3.</text>
</comment>
<comment type="subunit">
    <text evidence="1">Homodimer.</text>
</comment>
<comment type="subcellular location">
    <subcellularLocation>
        <location evidence="5">Plastid</location>
        <location evidence="5">Chloroplast</location>
    </subcellularLocation>
</comment>
<comment type="tissue specificity">
    <text evidence="5">Green tissues, leaves and chloroplasts.</text>
</comment>
<comment type="similarity">
    <text evidence="7">Belongs to the glucose-6-phosphate dehydrogenase family.</text>
</comment>
<evidence type="ECO:0000250" key="1">
    <source>
        <dbReference type="UniProtKB" id="P11411"/>
    </source>
</evidence>
<evidence type="ECO:0000250" key="2">
    <source>
        <dbReference type="UniProtKB" id="P11413"/>
    </source>
</evidence>
<evidence type="ECO:0000255" key="3"/>
<evidence type="ECO:0000256" key="4">
    <source>
        <dbReference type="SAM" id="MobiDB-lite"/>
    </source>
</evidence>
<evidence type="ECO:0000269" key="5">
    <source>
    </source>
</evidence>
<evidence type="ECO:0000269" key="6">
    <source>
    </source>
</evidence>
<evidence type="ECO:0000305" key="7"/>
<sequence>MGVQLRLNPCSSSSAATSPSTFHNGTPYFCKKFNFLPFRTQPLNWVSGIYSRIQPRKHFEVFSSNGFPLNAVSVQDVQVPLTELGSGDTTVSITVIGASGDLAKKKILPALFALFYEDCLPENFVVFGYSRTKLSDEELRNMISTTLTCRIDKRENCDAKMEHFLERCFYHSGQYNSEDDFAELDYKLKEKEGCRVSNRLFYLSIPPNIFVDVVRCASLKASSTSGWTRVIVEKPFGRDLESSSELTRSLKKYLTEEQIFRIDHYLGKELVENLSVLRFSNLVFEPLWSRNYIRNVQFIFSEDFGTEGRGGYFDHYGIIRDIMQNHLLQILALFAMETPVSLDAEDIRNEKVKVLRSMRPLQLEDVVLGQYKGHSNGAKSYPAYTDDPTVPNGSITPTFSAAALFIDNARWDGVPFLMKAGKALHTKRAEIRVQFRHVPGNLYKRNFGTDMDKATNELVLRLQPDEAIYLKINNKVPGLGMRLDRSDLNLLYKAKYRGEIPDAYERLLLDAIEGERRLFIRSDELDAAWALFTPLLKELEEKKIAPELYPYGSRGPVGAHYLAAKHNVRWGDLSGDD</sequence>
<name>G6PDC_SOLTU</name>
<accession>Q43839</accession>